<accession>Q9XYZ0</accession>
<organism>
    <name type="scientific">Conus pulicarius</name>
    <name type="common">Flea-bitten cone</name>
    <dbReference type="NCBI Taxonomy" id="93154"/>
    <lineage>
        <taxon>Eukaryota</taxon>
        <taxon>Metazoa</taxon>
        <taxon>Spiralia</taxon>
        <taxon>Lophotrochozoa</taxon>
        <taxon>Mollusca</taxon>
        <taxon>Gastropoda</taxon>
        <taxon>Caenogastropoda</taxon>
        <taxon>Neogastropoda</taxon>
        <taxon>Conoidea</taxon>
        <taxon>Conidae</taxon>
        <taxon>Conus</taxon>
    </lineage>
</organism>
<feature type="signal peptide" evidence="2">
    <location>
        <begin position="1"/>
        <end position="22"/>
    </location>
</feature>
<feature type="propeptide" id="PRO_0000034920" evidence="1">
    <location>
        <begin position="23"/>
        <end position="50"/>
    </location>
</feature>
<feature type="peptide" id="PRO_0000034921" description="Omega-conotoxin-like PuIA">
    <location>
        <begin position="51"/>
        <end position="80"/>
    </location>
</feature>
<feature type="disulfide bond" evidence="1">
    <location>
        <begin position="52"/>
        <end position="70"/>
    </location>
</feature>
<feature type="disulfide bond" evidence="1">
    <location>
        <begin position="59"/>
        <end position="74"/>
    </location>
</feature>
<feature type="disulfide bond" evidence="1">
    <location>
        <begin position="69"/>
        <end position="78"/>
    </location>
</feature>
<evidence type="ECO:0000250" key="1"/>
<evidence type="ECO:0000255" key="2"/>
<evidence type="ECO:0000305" key="3"/>
<sequence length="80" mass="8917">MKLTCVMIVAVLFLTAWTFVTADSIRALEDLFAKAPDEMENSGASPLNERDCRPVGQYCGIPYEHNWRCCSQLCAIICVS</sequence>
<dbReference type="EMBL" id="AF132129">
    <property type="protein sequence ID" value="AAD33585.1"/>
    <property type="molecule type" value="mRNA"/>
</dbReference>
<dbReference type="PIR" id="A59135">
    <property type="entry name" value="A59135"/>
</dbReference>
<dbReference type="ConoServer" id="875">
    <property type="toxin name" value="PuIA precursor"/>
</dbReference>
<dbReference type="GO" id="GO:0005576">
    <property type="term" value="C:extracellular region"/>
    <property type="evidence" value="ECO:0007669"/>
    <property type="project" value="UniProtKB-SubCell"/>
</dbReference>
<dbReference type="GO" id="GO:0044231">
    <property type="term" value="C:host cell presynaptic membrane"/>
    <property type="evidence" value="ECO:0007669"/>
    <property type="project" value="UniProtKB-KW"/>
</dbReference>
<dbReference type="GO" id="GO:0005246">
    <property type="term" value="F:calcium channel regulator activity"/>
    <property type="evidence" value="ECO:0007669"/>
    <property type="project" value="UniProtKB-KW"/>
</dbReference>
<dbReference type="GO" id="GO:0008200">
    <property type="term" value="F:ion channel inhibitor activity"/>
    <property type="evidence" value="ECO:0007669"/>
    <property type="project" value="InterPro"/>
</dbReference>
<dbReference type="GO" id="GO:0090729">
    <property type="term" value="F:toxin activity"/>
    <property type="evidence" value="ECO:0007669"/>
    <property type="project" value="UniProtKB-KW"/>
</dbReference>
<dbReference type="InterPro" id="IPR004214">
    <property type="entry name" value="Conotoxin"/>
</dbReference>
<dbReference type="InterPro" id="IPR012321">
    <property type="entry name" value="Conotoxin_omega-typ_CS"/>
</dbReference>
<dbReference type="Pfam" id="PF02950">
    <property type="entry name" value="Conotoxin"/>
    <property type="match status" value="1"/>
</dbReference>
<dbReference type="SUPFAM" id="SSF57059">
    <property type="entry name" value="omega toxin-like"/>
    <property type="match status" value="1"/>
</dbReference>
<dbReference type="PROSITE" id="PS60004">
    <property type="entry name" value="OMEGA_CONOTOXIN"/>
    <property type="match status" value="1"/>
</dbReference>
<name>O161A_CONPL</name>
<protein>
    <recommendedName>
        <fullName>Omega-conotoxin-like PuIA</fullName>
    </recommendedName>
</protein>
<keyword id="KW-0108">Calcium channel impairing toxin</keyword>
<keyword id="KW-1015">Disulfide bond</keyword>
<keyword id="KW-0872">Ion channel impairing toxin</keyword>
<keyword id="KW-0960">Knottin</keyword>
<keyword id="KW-0528">Neurotoxin</keyword>
<keyword id="KW-0638">Presynaptic neurotoxin</keyword>
<keyword id="KW-0964">Secreted</keyword>
<keyword id="KW-0732">Signal</keyword>
<keyword id="KW-0800">Toxin</keyword>
<keyword id="KW-1218">Voltage-gated calcium channel impairing toxin</keyword>
<reference key="1">
    <citation type="journal article" date="2000" name="Prog. Nat. Sci.">
        <title>Cloning of novel conotoxin precursor sequences from Conus pulicarius.</title>
        <authorList>
            <person name="Zhao D."/>
            <person name="Huang P."/>
        </authorList>
    </citation>
    <scope>NUCLEOTIDE SEQUENCE [MRNA]</scope>
</reference>
<proteinExistence type="evidence at transcript level"/>
<comment type="function">
    <text evidence="1">Omega-conotoxins act at presynaptic membranes, they bind and block voltage-gated calcium channels (Cav).</text>
</comment>
<comment type="subcellular location">
    <subcellularLocation>
        <location evidence="1">Secreted</location>
    </subcellularLocation>
</comment>
<comment type="tissue specificity">
    <text>Expressed by the venom duct.</text>
</comment>
<comment type="domain">
    <text evidence="1">The presence of a 'disulfide through disulfide knot' structurally defines this protein as a knottin.</text>
</comment>
<comment type="domain">
    <text>The cysteine framework is VI/VII (C-C-CC-C-C).</text>
</comment>
<comment type="similarity">
    <text evidence="3">Belongs to the conotoxin O1 superfamily.</text>
</comment>